<sequence>MKTYRRQIREKILQALYTLELRETDIESAAGWLLTPEILEDPNAMKFFNLLLKSIKDNREEIDRYIAAHTFNWDMSRIAIIDKNILRMALAELLYCEDIPPKVSINEAIEIAKKFNSTDKSSKFVNGILDAIFNELKTEGKIKKNGRGLINHSPAKVQKTEPE</sequence>
<protein>
    <recommendedName>
        <fullName evidence="1">Transcription antitermination protein NusB</fullName>
    </recommendedName>
    <alternativeName>
        <fullName evidence="1">Antitermination factor NusB</fullName>
    </alternativeName>
</protein>
<accession>Q3B298</accession>
<reference key="1">
    <citation type="submission" date="2005-08" db="EMBL/GenBank/DDBJ databases">
        <title>Complete sequence of Pelodictyon luteolum DSM 273.</title>
        <authorList>
            <consortium name="US DOE Joint Genome Institute"/>
            <person name="Copeland A."/>
            <person name="Lucas S."/>
            <person name="Lapidus A."/>
            <person name="Barry K."/>
            <person name="Detter J.C."/>
            <person name="Glavina T."/>
            <person name="Hammon N."/>
            <person name="Israni S."/>
            <person name="Pitluck S."/>
            <person name="Bryant D."/>
            <person name="Schmutz J."/>
            <person name="Larimer F."/>
            <person name="Land M."/>
            <person name="Kyrpides N."/>
            <person name="Ivanova N."/>
            <person name="Richardson P."/>
        </authorList>
    </citation>
    <scope>NUCLEOTIDE SEQUENCE [LARGE SCALE GENOMIC DNA]</scope>
    <source>
        <strain>DSM 273 / BCRC 81028 / 2530</strain>
    </source>
</reference>
<evidence type="ECO:0000255" key="1">
    <source>
        <dbReference type="HAMAP-Rule" id="MF_00073"/>
    </source>
</evidence>
<organism>
    <name type="scientific">Chlorobium luteolum (strain DSM 273 / BCRC 81028 / 2530)</name>
    <name type="common">Pelodictyon luteolum</name>
    <dbReference type="NCBI Taxonomy" id="319225"/>
    <lineage>
        <taxon>Bacteria</taxon>
        <taxon>Pseudomonadati</taxon>
        <taxon>Chlorobiota</taxon>
        <taxon>Chlorobiia</taxon>
        <taxon>Chlorobiales</taxon>
        <taxon>Chlorobiaceae</taxon>
        <taxon>Chlorobium/Pelodictyon group</taxon>
        <taxon>Pelodictyon</taxon>
    </lineage>
</organism>
<comment type="function">
    <text evidence="1">Involved in transcription antitermination. Required for transcription of ribosomal RNA (rRNA) genes. Binds specifically to the boxA antiterminator sequence of the ribosomal RNA (rrn) operons.</text>
</comment>
<comment type="similarity">
    <text evidence="1">Belongs to the NusB family.</text>
</comment>
<dbReference type="EMBL" id="CP000096">
    <property type="protein sequence ID" value="ABB24533.1"/>
    <property type="molecule type" value="Genomic_DNA"/>
</dbReference>
<dbReference type="RefSeq" id="WP_011358405.1">
    <property type="nucleotide sequence ID" value="NC_007512.1"/>
</dbReference>
<dbReference type="SMR" id="Q3B298"/>
<dbReference type="STRING" id="319225.Plut_1679"/>
<dbReference type="KEGG" id="plt:Plut_1679"/>
<dbReference type="eggNOG" id="COG0781">
    <property type="taxonomic scope" value="Bacteria"/>
</dbReference>
<dbReference type="HOGENOM" id="CLU_087843_3_0_10"/>
<dbReference type="OrthoDB" id="9787568at2"/>
<dbReference type="Proteomes" id="UP000002709">
    <property type="component" value="Chromosome"/>
</dbReference>
<dbReference type="GO" id="GO:0005829">
    <property type="term" value="C:cytosol"/>
    <property type="evidence" value="ECO:0007669"/>
    <property type="project" value="TreeGrafter"/>
</dbReference>
<dbReference type="GO" id="GO:0003723">
    <property type="term" value="F:RNA binding"/>
    <property type="evidence" value="ECO:0007669"/>
    <property type="project" value="UniProtKB-UniRule"/>
</dbReference>
<dbReference type="GO" id="GO:0006353">
    <property type="term" value="P:DNA-templated transcription termination"/>
    <property type="evidence" value="ECO:0007669"/>
    <property type="project" value="UniProtKB-UniRule"/>
</dbReference>
<dbReference type="GO" id="GO:0031564">
    <property type="term" value="P:transcription antitermination"/>
    <property type="evidence" value="ECO:0007669"/>
    <property type="project" value="UniProtKB-KW"/>
</dbReference>
<dbReference type="CDD" id="cd00619">
    <property type="entry name" value="Terminator_NusB"/>
    <property type="match status" value="1"/>
</dbReference>
<dbReference type="Gene3D" id="1.10.940.10">
    <property type="entry name" value="NusB-like"/>
    <property type="match status" value="1"/>
</dbReference>
<dbReference type="HAMAP" id="MF_00073">
    <property type="entry name" value="NusB"/>
    <property type="match status" value="1"/>
</dbReference>
<dbReference type="InterPro" id="IPR035926">
    <property type="entry name" value="NusB-like_sf"/>
</dbReference>
<dbReference type="InterPro" id="IPR011605">
    <property type="entry name" value="NusB_fam"/>
</dbReference>
<dbReference type="InterPro" id="IPR006027">
    <property type="entry name" value="NusB_RsmB_TIM44"/>
</dbReference>
<dbReference type="NCBIfam" id="TIGR01951">
    <property type="entry name" value="nusB"/>
    <property type="match status" value="1"/>
</dbReference>
<dbReference type="PANTHER" id="PTHR11078:SF3">
    <property type="entry name" value="ANTITERMINATION NUSB DOMAIN-CONTAINING PROTEIN"/>
    <property type="match status" value="1"/>
</dbReference>
<dbReference type="PANTHER" id="PTHR11078">
    <property type="entry name" value="N UTILIZATION SUBSTANCE PROTEIN B-RELATED"/>
    <property type="match status" value="1"/>
</dbReference>
<dbReference type="Pfam" id="PF01029">
    <property type="entry name" value="NusB"/>
    <property type="match status" value="1"/>
</dbReference>
<dbReference type="SUPFAM" id="SSF48013">
    <property type="entry name" value="NusB-like"/>
    <property type="match status" value="1"/>
</dbReference>
<name>NUSB_CHLL3</name>
<feature type="chain" id="PRO_0000265557" description="Transcription antitermination protein NusB">
    <location>
        <begin position="1"/>
        <end position="163"/>
    </location>
</feature>
<gene>
    <name evidence="1" type="primary">nusB</name>
    <name type="ordered locus">Plut_1679</name>
</gene>
<proteinExistence type="inferred from homology"/>
<keyword id="KW-1185">Reference proteome</keyword>
<keyword id="KW-0694">RNA-binding</keyword>
<keyword id="KW-0804">Transcription</keyword>
<keyword id="KW-0889">Transcription antitermination</keyword>
<keyword id="KW-0805">Transcription regulation</keyword>